<organism>
    <name type="scientific">Arthrobacter sp. (strain FB24)</name>
    <dbReference type="NCBI Taxonomy" id="290399"/>
    <lineage>
        <taxon>Bacteria</taxon>
        <taxon>Bacillati</taxon>
        <taxon>Actinomycetota</taxon>
        <taxon>Actinomycetes</taxon>
        <taxon>Micrococcales</taxon>
        <taxon>Micrococcaceae</taxon>
        <taxon>Arthrobacter</taxon>
    </lineage>
</organism>
<evidence type="ECO:0000255" key="1">
    <source>
        <dbReference type="HAMAP-Rule" id="MF_01698"/>
    </source>
</evidence>
<sequence>MSPAHPENWPVLVVKGGVDDELLRDFTALAAAAEESDGNPPLSEQTFVTLRAGESGTHSLLSLALYAPDEESDPATAQDLAGFAVVVEEADGTGVLELAVHPSYRNQGVADRLVATLKASRGFDGLKAWSHGNHEAAADLAAKYGYAPIRELWKMRLTASDAELPDAALPDNVSLRAFIPGQDEEAWLAANKAAFSHHPEQGNMTRQDLAARMAEDWFDPAGFLLAVDPSGRILGFHWTKVHPGHGGHPAIGEVYVVGVTPEAQGMGLGKALTVAGIKYLQDKGLHAVVLYTDADNTPAVSLYRRLGFTRWDADVMYGPKNGG</sequence>
<keyword id="KW-0012">Acyltransferase</keyword>
<keyword id="KW-1185">Reference proteome</keyword>
<keyword id="KW-0677">Repeat</keyword>
<keyword id="KW-0808">Transferase</keyword>
<name>MSHD_ARTS2</name>
<feature type="chain" id="PRO_0000400240" description="Mycothiol acetyltransferase">
    <location>
        <begin position="1"/>
        <end position="323"/>
    </location>
</feature>
<feature type="domain" description="N-acetyltransferase" evidence="1">
    <location>
        <begin position="173"/>
        <end position="323"/>
    </location>
</feature>
<feature type="binding site" evidence="1">
    <location>
        <position position="44"/>
    </location>
    <ligand>
        <name>1D-myo-inositol 2-(L-cysteinylamino)-2-deoxy-alpha-D-glucopyranoside</name>
        <dbReference type="ChEBI" id="CHEBI:58887"/>
    </ligand>
</feature>
<feature type="binding site" evidence="1">
    <location>
        <begin position="98"/>
        <end position="100"/>
    </location>
    <ligand>
        <name>acetyl-CoA</name>
        <dbReference type="ChEBI" id="CHEBI:57288"/>
        <label>1</label>
    </ligand>
</feature>
<feature type="binding site" evidence="1">
    <location>
        <position position="200"/>
    </location>
    <ligand>
        <name>1D-myo-inositol 2-(L-cysteinylamino)-2-deoxy-alpha-D-glucopyranoside</name>
        <dbReference type="ChEBI" id="CHEBI:58887"/>
    </ligand>
</feature>
<feature type="binding site" evidence="1">
    <location>
        <position position="240"/>
    </location>
    <ligand>
        <name>1D-myo-inositol 2-(L-cysteinylamino)-2-deoxy-alpha-D-glucopyranoside</name>
        <dbReference type="ChEBI" id="CHEBI:58887"/>
    </ligand>
</feature>
<feature type="binding site" evidence="1">
    <location>
        <position position="253"/>
    </location>
    <ligand>
        <name>1D-myo-inositol 2-(L-cysteinylamino)-2-deoxy-alpha-D-glucopyranoside</name>
        <dbReference type="ChEBI" id="CHEBI:58887"/>
    </ligand>
</feature>
<feature type="binding site" evidence="1">
    <location>
        <begin position="257"/>
        <end position="259"/>
    </location>
    <ligand>
        <name>acetyl-CoA</name>
        <dbReference type="ChEBI" id="CHEBI:57288"/>
        <label>2</label>
    </ligand>
</feature>
<feature type="binding site" evidence="1">
    <location>
        <begin position="264"/>
        <end position="270"/>
    </location>
    <ligand>
        <name>acetyl-CoA</name>
        <dbReference type="ChEBI" id="CHEBI:57288"/>
        <label>2</label>
    </ligand>
</feature>
<feature type="binding site" evidence="1">
    <location>
        <position position="291"/>
    </location>
    <ligand>
        <name>1D-myo-inositol 2-(L-cysteinylamino)-2-deoxy-alpha-D-glucopyranoside</name>
        <dbReference type="ChEBI" id="CHEBI:58887"/>
    </ligand>
</feature>
<gene>
    <name evidence="1" type="primary">mshD</name>
    <name type="ordered locus">Arth_3013</name>
</gene>
<accession>A0JZC2</accession>
<proteinExistence type="inferred from homology"/>
<comment type="function">
    <text evidence="1">Catalyzes the transfer of acetyl from acetyl-CoA to desacetylmycothiol (Cys-GlcN-Ins) to form mycothiol.</text>
</comment>
<comment type="catalytic activity">
    <reaction evidence="1">
        <text>1D-myo-inositol 2-(L-cysteinylamino)-2-deoxy-alpha-D-glucopyranoside + acetyl-CoA = mycothiol + CoA + H(+)</text>
        <dbReference type="Rhea" id="RHEA:26172"/>
        <dbReference type="ChEBI" id="CHEBI:15378"/>
        <dbReference type="ChEBI" id="CHEBI:16768"/>
        <dbReference type="ChEBI" id="CHEBI:57287"/>
        <dbReference type="ChEBI" id="CHEBI:57288"/>
        <dbReference type="ChEBI" id="CHEBI:58887"/>
        <dbReference type="EC" id="2.3.1.189"/>
    </reaction>
</comment>
<comment type="subunit">
    <text evidence="1">Monomer.</text>
</comment>
<comment type="similarity">
    <text evidence="1">Belongs to the acetyltransferase family. MshD subfamily.</text>
</comment>
<dbReference type="EC" id="2.3.1.189" evidence="1"/>
<dbReference type="EMBL" id="CP000454">
    <property type="protein sequence ID" value="ABK04392.1"/>
    <property type="molecule type" value="Genomic_DNA"/>
</dbReference>
<dbReference type="RefSeq" id="WP_011692844.1">
    <property type="nucleotide sequence ID" value="NC_008541.1"/>
</dbReference>
<dbReference type="SMR" id="A0JZC2"/>
<dbReference type="STRING" id="290399.Arth_3013"/>
<dbReference type="KEGG" id="art:Arth_3013"/>
<dbReference type="eggNOG" id="COG0456">
    <property type="taxonomic scope" value="Bacteria"/>
</dbReference>
<dbReference type="HOGENOM" id="CLU_068014_0_0_11"/>
<dbReference type="OrthoDB" id="3208058at2"/>
<dbReference type="Proteomes" id="UP000000754">
    <property type="component" value="Chromosome"/>
</dbReference>
<dbReference type="GO" id="GO:0035447">
    <property type="term" value="F:mycothiol synthase activity"/>
    <property type="evidence" value="ECO:0007669"/>
    <property type="project" value="UniProtKB-UniRule"/>
</dbReference>
<dbReference type="GO" id="GO:0008999">
    <property type="term" value="F:protein-N-terminal-alanine acetyltransferase activity"/>
    <property type="evidence" value="ECO:0007669"/>
    <property type="project" value="TreeGrafter"/>
</dbReference>
<dbReference type="GO" id="GO:0010125">
    <property type="term" value="P:mycothiol biosynthetic process"/>
    <property type="evidence" value="ECO:0007669"/>
    <property type="project" value="UniProtKB-UniRule"/>
</dbReference>
<dbReference type="CDD" id="cd04301">
    <property type="entry name" value="NAT_SF"/>
    <property type="match status" value="2"/>
</dbReference>
<dbReference type="Gene3D" id="3.40.630.30">
    <property type="match status" value="1"/>
</dbReference>
<dbReference type="HAMAP" id="MF_01698">
    <property type="entry name" value="MshD"/>
    <property type="match status" value="1"/>
</dbReference>
<dbReference type="InterPro" id="IPR016181">
    <property type="entry name" value="Acyl_CoA_acyltransferase"/>
</dbReference>
<dbReference type="InterPro" id="IPR000182">
    <property type="entry name" value="GNAT_dom"/>
</dbReference>
<dbReference type="InterPro" id="IPR050276">
    <property type="entry name" value="MshD_Acetyltransferase"/>
</dbReference>
<dbReference type="InterPro" id="IPR017813">
    <property type="entry name" value="Mycothiol_AcTrfase"/>
</dbReference>
<dbReference type="NCBIfam" id="TIGR03448">
    <property type="entry name" value="mycothiol_MshD"/>
    <property type="match status" value="1"/>
</dbReference>
<dbReference type="PANTHER" id="PTHR43617">
    <property type="entry name" value="L-AMINO ACID N-ACETYLTRANSFERASE"/>
    <property type="match status" value="1"/>
</dbReference>
<dbReference type="PANTHER" id="PTHR43617:SF31">
    <property type="entry name" value="MYCOTHIOL ACETYLTRANSFERASE"/>
    <property type="match status" value="1"/>
</dbReference>
<dbReference type="Pfam" id="PF00583">
    <property type="entry name" value="Acetyltransf_1"/>
    <property type="match status" value="1"/>
</dbReference>
<dbReference type="Pfam" id="PF13508">
    <property type="entry name" value="Acetyltransf_7"/>
    <property type="match status" value="1"/>
</dbReference>
<dbReference type="PIRSF" id="PIRSF021524">
    <property type="entry name" value="MSH_acetyltransferase"/>
    <property type="match status" value="1"/>
</dbReference>
<dbReference type="SUPFAM" id="SSF55729">
    <property type="entry name" value="Acyl-CoA N-acyltransferases (Nat)"/>
    <property type="match status" value="2"/>
</dbReference>
<dbReference type="PROSITE" id="PS51186">
    <property type="entry name" value="GNAT"/>
    <property type="match status" value="1"/>
</dbReference>
<protein>
    <recommendedName>
        <fullName evidence="1">Mycothiol acetyltransferase</fullName>
        <shortName evidence="1">MSH acetyltransferase</shortName>
        <ecNumber evidence="1">2.3.1.189</ecNumber>
    </recommendedName>
    <alternativeName>
        <fullName evidence="1">Mycothiol synthase</fullName>
    </alternativeName>
</protein>
<reference key="1">
    <citation type="journal article" date="2013" name="Stand. Genomic Sci.">
        <title>Complete genome sequence of Arthrobacter sp. strain FB24.</title>
        <authorList>
            <person name="Nakatsu C.H."/>
            <person name="Barabote R."/>
            <person name="Thompson S."/>
            <person name="Bruce D."/>
            <person name="Detter C."/>
            <person name="Brettin T."/>
            <person name="Han C."/>
            <person name="Beasley F."/>
            <person name="Chen W."/>
            <person name="Konopka A."/>
            <person name="Xie G."/>
        </authorList>
    </citation>
    <scope>NUCLEOTIDE SEQUENCE [LARGE SCALE GENOMIC DNA]</scope>
    <source>
        <strain>FB24</strain>
    </source>
</reference>